<sequence>MAARLCCQLDPARDVLCLRPVGAESRGRPFSGPFGTLSSPSPSAVSTDHGAHLSLRGLPVCAFSSAGPCALRFTSARRMETTVNAHQFLPKVLYKRTLGLSVMSTTDLEAYFKDCLFKDWEELGEETRLMIFVLGGCRHKLVCAPAPCNFFTSA</sequence>
<proteinExistence type="inferred from homology"/>
<reference key="1">
    <citation type="journal article" date="1998" name="Virology">
        <title>Analysis of hepatitis B virus populations in an interferon-alpha-treated patient reveals predominant mutations in the C-gene and changing e-antigenicity.</title>
        <authorList>
            <person name="Gunther S."/>
            <person name="Paulij W."/>
            <person name="Meisel H."/>
            <person name="Will H."/>
        </authorList>
    </citation>
    <scope>NUCLEOTIDE SEQUENCE [GENOMIC DNA]</scope>
    <source>
        <strain>Isolate 6/89</strain>
        <strain>Isolate Germany/1-91/1991</strain>
    </source>
</reference>
<reference key="2">
    <citation type="journal article" date="2004" name="J. Virol.">
        <title>The enigmatic X gene of hepatitis B virus.</title>
        <authorList>
            <person name="Bouchard M.J."/>
            <person name="Schneider R.J."/>
        </authorList>
    </citation>
    <scope>REVIEW</scope>
</reference>
<reference key="3">
    <citation type="journal article" date="2006" name="Cancer Sci.">
        <title>Molecular functions and biological roles of hepatitis B virus x protein.</title>
        <authorList>
            <person name="Tang H."/>
            <person name="Oishi N."/>
            <person name="Kaneko S."/>
            <person name="Murakami S."/>
        </authorList>
    </citation>
    <scope>REVIEW</scope>
</reference>
<organismHost>
    <name type="scientific">Homo sapiens</name>
    <name type="common">Human</name>
    <dbReference type="NCBI Taxonomy" id="9606"/>
</organismHost>
<organismHost>
    <name type="scientific">Pan troglodytes</name>
    <name type="common">Chimpanzee</name>
    <dbReference type="NCBI Taxonomy" id="9598"/>
</organismHost>
<protein>
    <recommendedName>
        <fullName evidence="1">Protein X</fullName>
    </recommendedName>
    <alternativeName>
        <fullName evidence="1">HBx</fullName>
    </alternativeName>
    <alternativeName>
        <fullName evidence="1">Peptide X</fullName>
    </alternativeName>
    <alternativeName>
        <fullName evidence="1">pX</fullName>
    </alternativeName>
</protein>
<name>X_HBVD7</name>
<evidence type="ECO:0000255" key="1">
    <source>
        <dbReference type="HAMAP-Rule" id="MF_04074"/>
    </source>
</evidence>
<gene>
    <name evidence="1" type="primary">X</name>
</gene>
<keyword id="KW-1074">Activation of host NF-kappa-B by virus</keyword>
<keyword id="KW-0010">Activator</keyword>
<keyword id="KW-0053">Apoptosis</keyword>
<keyword id="KW-1035">Host cytoplasm</keyword>
<keyword id="KW-1079">Host G2/M cell cycle arrest by virus</keyword>
<keyword id="KW-1045">Host mitochondrion</keyword>
<keyword id="KW-1048">Host nucleus</keyword>
<keyword id="KW-0945">Host-virus interaction</keyword>
<keyword id="KW-1121">Modulation of host cell cycle by virus</keyword>
<keyword id="KW-1185">Reference proteome</keyword>
<keyword id="KW-0804">Transcription</keyword>
<keyword id="KW-0805">Transcription regulation</keyword>
<dbReference type="EMBL" id="AF043593">
    <property type="protein sequence ID" value="AAC40805.1"/>
    <property type="molecule type" value="Genomic_DNA"/>
</dbReference>
<dbReference type="EMBL" id="AF043594">
    <property type="protein sequence ID" value="AAC40813.1"/>
    <property type="molecule type" value="Genomic_DNA"/>
</dbReference>
<dbReference type="SMR" id="O93195"/>
<dbReference type="Proteomes" id="UP000008283">
    <property type="component" value="Genome"/>
</dbReference>
<dbReference type="Proteomes" id="UP000146378">
    <property type="component" value="Genome"/>
</dbReference>
<dbReference type="GO" id="GO:0033650">
    <property type="term" value="C:host cell mitochondrion"/>
    <property type="evidence" value="ECO:0007669"/>
    <property type="project" value="UniProtKB-SubCell"/>
</dbReference>
<dbReference type="GO" id="GO:0042025">
    <property type="term" value="C:host cell nucleus"/>
    <property type="evidence" value="ECO:0007669"/>
    <property type="project" value="UniProtKB-SubCell"/>
</dbReference>
<dbReference type="GO" id="GO:0006351">
    <property type="term" value="P:DNA-templated transcription"/>
    <property type="evidence" value="ECO:0007669"/>
    <property type="project" value="UniProtKB-UniRule"/>
</dbReference>
<dbReference type="GO" id="GO:0085033">
    <property type="term" value="P:symbiont-mediated activation of host NF-kappaB cascade"/>
    <property type="evidence" value="ECO:0007669"/>
    <property type="project" value="UniProtKB-UniRule"/>
</dbReference>
<dbReference type="GO" id="GO:0039592">
    <property type="term" value="P:symbiont-mediated arrest of host cell cycle during G2/M transition"/>
    <property type="evidence" value="ECO:0007669"/>
    <property type="project" value="UniProtKB-UniRule"/>
</dbReference>
<dbReference type="GO" id="GO:0019079">
    <property type="term" value="P:viral genome replication"/>
    <property type="evidence" value="ECO:0007669"/>
    <property type="project" value="UniProtKB-UniRule"/>
</dbReference>
<dbReference type="HAMAP" id="MF_04074">
    <property type="entry name" value="HBV_X"/>
    <property type="match status" value="1"/>
</dbReference>
<dbReference type="InterPro" id="IPR000236">
    <property type="entry name" value="Transactivation_prot_X"/>
</dbReference>
<dbReference type="Pfam" id="PF00739">
    <property type="entry name" value="X"/>
    <property type="match status" value="1"/>
</dbReference>
<accession>O93195</accession>
<comment type="function">
    <text evidence="1">Multifunctional protein that plays a role in silencing host antiviral defenses and promoting viral transcription. Does not seem to be essential for HBV infection. May be directly involved in development of cirrhosis and liver cancer (hepatocellular carcinoma). Most of cytosolic activities involve modulation of cytosolic calcium. The effect on apoptosis is controversial depending on the cell types in which the studies have been conducted. May induce apoptosis by localizing in mitochondria and causing loss of mitochondrial membrane potential. May also modulate apoptosis by binding host CFLAR, a key regulator of the death-inducing signaling complex (DISC). Promotes viral transcription by using the host E3 ubiquitin ligase DDB1 to target the SMC5-SMC6 complex to proteasomal degradation. This host complex would otherwise bind to viral episomal DNA, and prevents its transcription. Moderately stimulates transcription of many different viral and cellular transcription elements. Promoters and enhancers stimulated by HBx contain DNA binding sites for NF-kappa-B, AP-1, AP-2, c-EBP, ATF/CREB, or the calcium-activated factor NF-AT.</text>
</comment>
<comment type="subunit">
    <text evidence="1">May form homodimer. May interact with host CEBPA, CFLAR, CREB1, DDB1, E4F1, HBXIP, HSPD1/HSP60, NFKBIA, POLR2E and SMAD4. Interacts with host SMC5-SMC6 complex and induces its degradation. Interacts with host TRPC4AP; leading to prevent ubiquitination of TRPC4AP. Interacts with host PLSCR1; this interaction promotes ubiquitination and degradation of HBx and impairs HBx-mediated cell proliferation.</text>
</comment>
<comment type="subcellular location">
    <subcellularLocation>
        <location evidence="1">Host cytoplasm</location>
    </subcellularLocation>
    <subcellularLocation>
        <location evidence="1">Host nucleus</location>
    </subcellularLocation>
    <subcellularLocation>
        <location evidence="1">Host mitochondrion</location>
    </subcellularLocation>
    <text evidence="1">Mainly cytoplasmic as only a fraction is detected in the nucleus. In cytoplasm, a minor fraction associates with mitochondria or proteasomes.</text>
</comment>
<comment type="PTM">
    <text evidence="1">A fraction may be phosphorylated in insect cells and HepG2 cells, a human hepatoblastoma cell line. Phosphorylated in vitro by host protein kinase C or mitogen-activated protein kinase. N-acetylated in insect cells.</text>
</comment>
<comment type="similarity">
    <text evidence="1">Belongs to the orthohepadnavirus protein X family.</text>
</comment>
<comment type="caution">
    <text>Transcriptional activities should be taken with a grain of salt. As of 2007, all studies demonstrating in vivo interaction between protein X and transcriptional components were performed with significant overexpression of both proteins and in the absence of viral infection.</text>
</comment>
<organism>
    <name type="scientific">Hepatitis B virus genotype D (isolate Germany/1-91/1991)</name>
    <name type="common">HBV-D</name>
    <dbReference type="NCBI Taxonomy" id="489490"/>
    <lineage>
        <taxon>Viruses</taxon>
        <taxon>Riboviria</taxon>
        <taxon>Pararnavirae</taxon>
        <taxon>Artverviricota</taxon>
        <taxon>Revtraviricetes</taxon>
        <taxon>Blubervirales</taxon>
        <taxon>Hepadnaviridae</taxon>
        <taxon>Orthohepadnavirus</taxon>
        <taxon>Hepatitis B virus</taxon>
        <taxon>hepatitis B virus genotype D</taxon>
    </lineage>
</organism>
<feature type="chain" id="PRO_0000319913" description="Protein X">
    <location>
        <begin position="1"/>
        <end position="154"/>
    </location>
</feature>
<feature type="region of interest" description="Mitochondrial targeting sequence" evidence="1">
    <location>
        <begin position="68"/>
        <end position="117"/>
    </location>
</feature>